<proteinExistence type="evidence at protein level"/>
<gene>
    <name type="primary">sodA</name>
    <name type="synonym">sod</name>
</gene>
<accession>P0C0I0</accession>
<accession>O54264</accession>
<accession>P77957</accession>
<accession>Q59941</accession>
<protein>
    <recommendedName>
        <fullName>Superoxide dismutase [Mn]</fullName>
        <ecNumber>1.15.1.1</ecNumber>
    </recommendedName>
</protein>
<evidence type="ECO:0000250" key="1"/>
<evidence type="ECO:0000269" key="2">
    <source>
    </source>
</evidence>
<evidence type="ECO:0000305" key="3"/>
<name>SODM_STRPY</name>
<organism>
    <name type="scientific">Streptococcus pyogenes</name>
    <dbReference type="NCBI Taxonomy" id="1314"/>
    <lineage>
        <taxon>Bacteria</taxon>
        <taxon>Bacillati</taxon>
        <taxon>Bacillota</taxon>
        <taxon>Bacilli</taxon>
        <taxon>Lactobacillales</taxon>
        <taxon>Streptococcaceae</taxon>
        <taxon>Streptococcus</taxon>
    </lineage>
</organism>
<reference key="1">
    <citation type="journal article" date="1998" name="FEMS Microbiol. Lett.">
        <title>Extracellular superoxide dismutase from Streptococcus pyogenes type 12 strain is manganese-dependent.</title>
        <authorList>
            <person name="Gerlach D."/>
            <person name="Reichardt W."/>
            <person name="Vettermann S."/>
        </authorList>
    </citation>
    <scope>NUCLEOTIDE SEQUENCE [GENOMIC DNA]</scope>
    <scope>PROTEIN SEQUENCE OF 2-21</scope>
    <scope>CHARACTERIZATION</scope>
    <source>
        <strain>12,714 / Scarlatina</strain>
    </source>
</reference>
<reference key="2">
    <citation type="journal article" date="1996" name="J. Bacteriol.">
        <title>Insertional inactivation of Streptococcus pyogenes sod suggests that prtF is regulated in response to a superoxide signal.</title>
        <authorList>
            <person name="Gibson C.M."/>
            <person name="Caparon M.G."/>
        </authorList>
    </citation>
    <scope>NUCLEOTIDE SEQUENCE [GENOMIC DNA] OF 18-201</scope>
    <source>
        <strain>HSC5 / Serotype M6</strain>
    </source>
</reference>
<reference key="3">
    <citation type="journal article" date="1995" name="FEMS Microbiol. Lett.">
        <title>Characterization of superoxide dismutase genes from Gram-positive bacteria by polymerase chain reaction using degenerate primers.</title>
        <authorList>
            <person name="Poyart C."/>
            <person name="Berche P."/>
            <person name="Trieu-Cuot P."/>
        </authorList>
    </citation>
    <scope>NUCLEOTIDE SEQUENCE [GENOMIC DNA] OF 18-162</scope>
    <source>
        <strain>BM105</strain>
    </source>
</reference>
<reference key="4">
    <citation type="submission" date="1997-08" db="EMBL/GenBank/DDBJ databases">
        <authorList>
            <person name="Poyart C."/>
            <person name="Quesne G."/>
            <person name="Coulon S."/>
            <person name="Berche P."/>
            <person name="Trieu-Cuot P."/>
        </authorList>
    </citation>
    <scope>NUCLEOTIDE SEQUENCE [GENOMIC DNA] OF 18-162</scope>
    <source>
        <strain>ATCC 12344 / CIP 56.41 / DSM 20565 / JCM 5674 / NCTC 8198</strain>
    </source>
</reference>
<comment type="function">
    <text>Destroys superoxide anion radicals which are normally produced within the cells and which are toxic to biological systems.</text>
</comment>
<comment type="catalytic activity">
    <reaction>
        <text>2 superoxide + 2 H(+) = H2O2 + O2</text>
        <dbReference type="Rhea" id="RHEA:20696"/>
        <dbReference type="ChEBI" id="CHEBI:15378"/>
        <dbReference type="ChEBI" id="CHEBI:15379"/>
        <dbReference type="ChEBI" id="CHEBI:16240"/>
        <dbReference type="ChEBI" id="CHEBI:18421"/>
        <dbReference type="EC" id="1.15.1.1"/>
    </reaction>
</comment>
<comment type="cofactor">
    <cofactor evidence="1">
        <name>Mn(2+)</name>
        <dbReference type="ChEBI" id="CHEBI:29035"/>
    </cofactor>
    <text evidence="1">Binds 1 Mn(2+) ion per subunit.</text>
</comment>
<comment type="subunit">
    <text>Homodimer.</text>
</comment>
<comment type="subcellular location">
    <subcellularLocation>
        <location>Secreted</location>
    </subcellularLocation>
</comment>
<comment type="similarity">
    <text evidence="3">Belongs to the iron/manganese superoxide dismutase family.</text>
</comment>
<comment type="caution">
    <text evidence="3">Although found extracellularly, no signal sequence is present. An alternative secretory pathway may be used.</text>
</comment>
<dbReference type="EC" id="1.15.1.1"/>
<dbReference type="EMBL" id="AJ223292">
    <property type="protein sequence ID" value="CAA11227.1"/>
    <property type="molecule type" value="Genomic_DNA"/>
</dbReference>
<dbReference type="EMBL" id="U43776">
    <property type="protein sequence ID" value="AAB17024.1"/>
    <property type="molecule type" value="Genomic_DNA"/>
</dbReference>
<dbReference type="EMBL" id="Z49247">
    <property type="protein sequence ID" value="CAA89214.1"/>
    <property type="molecule type" value="Genomic_DNA"/>
</dbReference>
<dbReference type="EMBL" id="Z95915">
    <property type="protein sequence ID" value="CAB09368.1"/>
    <property type="molecule type" value="Genomic_DNA"/>
</dbReference>
<dbReference type="SMR" id="P0C0I0"/>
<dbReference type="STRING" id="1314.SD89_06105"/>
<dbReference type="eggNOG" id="COG0605">
    <property type="taxonomic scope" value="Bacteria"/>
</dbReference>
<dbReference type="GO" id="GO:0005737">
    <property type="term" value="C:cytoplasm"/>
    <property type="evidence" value="ECO:0007669"/>
    <property type="project" value="TreeGrafter"/>
</dbReference>
<dbReference type="GO" id="GO:0005576">
    <property type="term" value="C:extracellular region"/>
    <property type="evidence" value="ECO:0007669"/>
    <property type="project" value="UniProtKB-SubCell"/>
</dbReference>
<dbReference type="GO" id="GO:0046872">
    <property type="term" value="F:metal ion binding"/>
    <property type="evidence" value="ECO:0007669"/>
    <property type="project" value="UniProtKB-KW"/>
</dbReference>
<dbReference type="GO" id="GO:0004784">
    <property type="term" value="F:superoxide dismutase activity"/>
    <property type="evidence" value="ECO:0007669"/>
    <property type="project" value="UniProtKB-EC"/>
</dbReference>
<dbReference type="FunFam" id="1.10.287.990:FF:000001">
    <property type="entry name" value="Superoxide dismutase"/>
    <property type="match status" value="1"/>
</dbReference>
<dbReference type="FunFam" id="3.55.40.20:FF:000001">
    <property type="entry name" value="Superoxide dismutase"/>
    <property type="match status" value="1"/>
</dbReference>
<dbReference type="Gene3D" id="1.10.287.990">
    <property type="entry name" value="Fe,Mn superoxide dismutase (SOD) domain"/>
    <property type="match status" value="1"/>
</dbReference>
<dbReference type="Gene3D" id="3.55.40.20">
    <property type="entry name" value="Iron/manganese superoxide dismutase, C-terminal domain"/>
    <property type="match status" value="1"/>
</dbReference>
<dbReference type="InterPro" id="IPR001189">
    <property type="entry name" value="Mn/Fe_SOD"/>
</dbReference>
<dbReference type="InterPro" id="IPR019833">
    <property type="entry name" value="Mn/Fe_SOD_BS"/>
</dbReference>
<dbReference type="InterPro" id="IPR019832">
    <property type="entry name" value="Mn/Fe_SOD_C"/>
</dbReference>
<dbReference type="InterPro" id="IPR019831">
    <property type="entry name" value="Mn/Fe_SOD_N"/>
</dbReference>
<dbReference type="InterPro" id="IPR036324">
    <property type="entry name" value="Mn/Fe_SOD_N_sf"/>
</dbReference>
<dbReference type="InterPro" id="IPR036314">
    <property type="entry name" value="SOD_C_sf"/>
</dbReference>
<dbReference type="PANTHER" id="PTHR43595">
    <property type="entry name" value="37S RIBOSOMAL PROTEIN S26, MITOCHONDRIAL"/>
    <property type="match status" value="1"/>
</dbReference>
<dbReference type="PANTHER" id="PTHR43595:SF2">
    <property type="entry name" value="SMALL RIBOSOMAL SUBUNIT PROTEIN MS42"/>
    <property type="match status" value="1"/>
</dbReference>
<dbReference type="Pfam" id="PF02777">
    <property type="entry name" value="Sod_Fe_C"/>
    <property type="match status" value="1"/>
</dbReference>
<dbReference type="Pfam" id="PF00081">
    <property type="entry name" value="Sod_Fe_N"/>
    <property type="match status" value="1"/>
</dbReference>
<dbReference type="PIRSF" id="PIRSF000349">
    <property type="entry name" value="SODismutase"/>
    <property type="match status" value="1"/>
</dbReference>
<dbReference type="PRINTS" id="PR01703">
    <property type="entry name" value="MNSODISMTASE"/>
</dbReference>
<dbReference type="SUPFAM" id="SSF54719">
    <property type="entry name" value="Fe,Mn superoxide dismutase (SOD), C-terminal domain"/>
    <property type="match status" value="1"/>
</dbReference>
<dbReference type="SUPFAM" id="SSF46609">
    <property type="entry name" value="Fe,Mn superoxide dismutase (SOD), N-terminal domain"/>
    <property type="match status" value="1"/>
</dbReference>
<dbReference type="PROSITE" id="PS00088">
    <property type="entry name" value="SOD_MN"/>
    <property type="match status" value="1"/>
</dbReference>
<keyword id="KW-0903">Direct protein sequencing</keyword>
<keyword id="KW-0464">Manganese</keyword>
<keyword id="KW-0479">Metal-binding</keyword>
<keyword id="KW-0560">Oxidoreductase</keyword>
<keyword id="KW-0964">Secreted</keyword>
<sequence length="201" mass="22606">MAIILPELPYAYDALEPQFDAETMTLHHDKHHATYVANTDAALEKHPEIGENLEELLADVPKIPEDIRQALINNGGGHLNHALFWELLSPEKQDVTPDVAQAIDDAFGSFDAFKEQFTAAATGRFGSGWAWLVVNKEGQLEITSTANQDTPISEGKKPILALDVWEHAYYLNYRNVRPNYIKAFFEIINWKKVSALYQAAK</sequence>
<feature type="initiator methionine" description="Removed" evidence="2">
    <location>
        <position position="1"/>
    </location>
</feature>
<feature type="chain" id="PRO_0000160100" description="Superoxide dismutase [Mn]">
    <location>
        <begin position="2"/>
        <end position="201"/>
    </location>
</feature>
<feature type="binding site" evidence="1">
    <location>
        <position position="27"/>
    </location>
    <ligand>
        <name>Mn(2+)</name>
        <dbReference type="ChEBI" id="CHEBI:29035"/>
    </ligand>
</feature>
<feature type="binding site" evidence="1">
    <location>
        <position position="81"/>
    </location>
    <ligand>
        <name>Mn(2+)</name>
        <dbReference type="ChEBI" id="CHEBI:29035"/>
    </ligand>
</feature>
<feature type="binding site" evidence="1">
    <location>
        <position position="163"/>
    </location>
    <ligand>
        <name>Mn(2+)</name>
        <dbReference type="ChEBI" id="CHEBI:29035"/>
    </ligand>
</feature>
<feature type="binding site" evidence="1">
    <location>
        <position position="167"/>
    </location>
    <ligand>
        <name>Mn(2+)</name>
        <dbReference type="ChEBI" id="CHEBI:29035"/>
    </ligand>
</feature>
<feature type="sequence conflict" description="In Ref. 2, 3 and 4." evidence="3" ref="2 3 4">
    <original>D</original>
    <variation>N</variation>
    <location>
        <position position="40"/>
    </location>
</feature>
<feature type="sequence conflict" description="In Ref. 2, 3 and 4." evidence="3" ref="2 3 4">
    <original>P</original>
    <variation>T</variation>
    <location>
        <position position="61"/>
    </location>
</feature>
<feature type="sequence conflict" description="In Ref. 2; AAB17024." evidence="3" ref="2">
    <original>SA</original>
    <variation>LE</variation>
    <location>
        <begin position="194"/>
        <end position="195"/>
    </location>
</feature>